<reference key="1">
    <citation type="journal article" date="2003" name="Nat. Genet.">
        <title>Comparative analysis of the genome sequences of Bordetella pertussis, Bordetella parapertussis and Bordetella bronchiseptica.</title>
        <authorList>
            <person name="Parkhill J."/>
            <person name="Sebaihia M."/>
            <person name="Preston A."/>
            <person name="Murphy L.D."/>
            <person name="Thomson N.R."/>
            <person name="Harris D.E."/>
            <person name="Holden M.T.G."/>
            <person name="Churcher C.M."/>
            <person name="Bentley S.D."/>
            <person name="Mungall K.L."/>
            <person name="Cerdeno-Tarraga A.-M."/>
            <person name="Temple L."/>
            <person name="James K.D."/>
            <person name="Harris B."/>
            <person name="Quail M.A."/>
            <person name="Achtman M."/>
            <person name="Atkin R."/>
            <person name="Baker S."/>
            <person name="Basham D."/>
            <person name="Bason N."/>
            <person name="Cherevach I."/>
            <person name="Chillingworth T."/>
            <person name="Collins M."/>
            <person name="Cronin A."/>
            <person name="Davis P."/>
            <person name="Doggett J."/>
            <person name="Feltwell T."/>
            <person name="Goble A."/>
            <person name="Hamlin N."/>
            <person name="Hauser H."/>
            <person name="Holroyd S."/>
            <person name="Jagels K."/>
            <person name="Leather S."/>
            <person name="Moule S."/>
            <person name="Norberczak H."/>
            <person name="O'Neil S."/>
            <person name="Ormond D."/>
            <person name="Price C."/>
            <person name="Rabbinowitsch E."/>
            <person name="Rutter S."/>
            <person name="Sanders M."/>
            <person name="Saunders D."/>
            <person name="Seeger K."/>
            <person name="Sharp S."/>
            <person name="Simmonds M."/>
            <person name="Skelton J."/>
            <person name="Squares R."/>
            <person name="Squares S."/>
            <person name="Stevens K."/>
            <person name="Unwin L."/>
            <person name="Whitehead S."/>
            <person name="Barrell B.G."/>
            <person name="Maskell D.J."/>
        </authorList>
    </citation>
    <scope>NUCLEOTIDE SEQUENCE [LARGE SCALE GENOMIC DNA]</scope>
    <source>
        <strain>ATCC BAA-588 / NCTC 13252 / RB50</strain>
    </source>
</reference>
<sequence>MLPSAQAPSLLNPTDDFAALGNIAWLWMNSPMHRDWPVHLLARNTLAPIQLGQYILLRCNDVPVAYCSWALMDADTELSYVMAPSSLGGNAWNCGDRLWIIDWIAPFSRDDNRALRRALAERHPDSVGRSLRVRRGGDTARVKEYRGRALDAAAARAQLDRYHAELIAGLRASNGGYAPRGRGTA</sequence>
<feature type="chain" id="PRO_0000217888" description="Protein-lysine palmitoyltransferase CyaC">
    <location>
        <begin position="1"/>
        <end position="185"/>
    </location>
</feature>
<feature type="active site" evidence="2">
    <location>
        <position position="33"/>
    </location>
</feature>
<feature type="active site" evidence="2">
    <location>
        <position position="102"/>
    </location>
</feature>
<accession>P0A3I6</accession>
<accession>Q45359</accession>
<dbReference type="EC" id="2.3.1.-" evidence="1"/>
<dbReference type="EMBL" id="BX640437">
    <property type="protein sequence ID" value="CAE30821.1"/>
    <property type="status" value="ALT_INIT"/>
    <property type="molecule type" value="Genomic_DNA"/>
</dbReference>
<dbReference type="RefSeq" id="WP_010929994.1">
    <property type="nucleotide sequence ID" value="NC_002927.3"/>
</dbReference>
<dbReference type="SMR" id="P0A3I6"/>
<dbReference type="GeneID" id="93206552"/>
<dbReference type="KEGG" id="bbr:BB0323"/>
<dbReference type="eggNOG" id="COG2994">
    <property type="taxonomic scope" value="Bacteria"/>
</dbReference>
<dbReference type="HOGENOM" id="CLU_116529_0_1_4"/>
<dbReference type="Proteomes" id="UP000001027">
    <property type="component" value="Chromosome"/>
</dbReference>
<dbReference type="GO" id="GO:0005737">
    <property type="term" value="C:cytoplasm"/>
    <property type="evidence" value="ECO:0007669"/>
    <property type="project" value="UniProtKB-SubCell"/>
</dbReference>
<dbReference type="GO" id="GO:0140771">
    <property type="term" value="F:ACP-dependent peptidyl-lysine N6-palmitoyltransferase activity"/>
    <property type="evidence" value="ECO:0007669"/>
    <property type="project" value="RHEA"/>
</dbReference>
<dbReference type="GO" id="GO:0031640">
    <property type="term" value="P:killing of cells of another organism"/>
    <property type="evidence" value="ECO:0007669"/>
    <property type="project" value="UniProtKB-KW"/>
</dbReference>
<dbReference type="GO" id="GO:0009404">
    <property type="term" value="P:toxin metabolic process"/>
    <property type="evidence" value="ECO:0007669"/>
    <property type="project" value="InterPro"/>
</dbReference>
<dbReference type="InterPro" id="IPR003996">
    <property type="entry name" value="RTX_toxin-activating_protC_bac"/>
</dbReference>
<dbReference type="Pfam" id="PF02794">
    <property type="entry name" value="HlyC"/>
    <property type="match status" value="1"/>
</dbReference>
<dbReference type="PRINTS" id="PR01489">
    <property type="entry name" value="RTXTOXINC"/>
</dbReference>
<keyword id="KW-0012">Acyltransferase</keyword>
<keyword id="KW-0204">Cytolysis</keyword>
<keyword id="KW-0963">Cytoplasm</keyword>
<keyword id="KW-0808">Transferase</keyword>
<keyword id="KW-0843">Virulence</keyword>
<proteinExistence type="inferred from homology"/>
<protein>
    <recommendedName>
        <fullName evidence="3">Protein-lysine palmitoyltransferase CyaC</fullName>
        <ecNumber evidence="1">2.3.1.-</ecNumber>
    </recommendedName>
    <alternativeName>
        <fullName evidence="3">Cyclolysin-activating lysine-acyltransferase CyaC</fullName>
    </alternativeName>
</protein>
<organism>
    <name type="scientific">Bordetella bronchiseptica (strain ATCC BAA-588 / NCTC 13252 / RB50)</name>
    <name type="common">Alcaligenes bronchisepticus</name>
    <dbReference type="NCBI Taxonomy" id="257310"/>
    <lineage>
        <taxon>Bacteria</taxon>
        <taxon>Pseudomonadati</taxon>
        <taxon>Pseudomonadota</taxon>
        <taxon>Betaproteobacteria</taxon>
        <taxon>Burkholderiales</taxon>
        <taxon>Alcaligenaceae</taxon>
        <taxon>Bordetella</taxon>
    </lineage>
</organism>
<gene>
    <name evidence="1" type="primary">cyaC</name>
    <name type="synonym">hlyC</name>
    <name type="ordered locus">BB0323</name>
</gene>
<name>CYAC_BORBR</name>
<comment type="function">
    <text evidence="1">Protein-lysine palmitoyltransferase that catalyzes palmitoylation of the protoxin (CyaA) at two internal lysine residues, thereby converting it to the active toxin.</text>
</comment>
<comment type="catalytic activity">
    <reaction evidence="1">
        <text>hexadecanoyl-[ACP] + L-lysyl-[protein] = N(6)-hexadecanoyl-L-lysyl-[protein] + holo-[ACP] + H(+)</text>
        <dbReference type="Rhea" id="RHEA:70615"/>
        <dbReference type="Rhea" id="RHEA-COMP:9652"/>
        <dbReference type="Rhea" id="RHEA-COMP:9685"/>
        <dbReference type="Rhea" id="RHEA-COMP:9752"/>
        <dbReference type="Rhea" id="RHEA-COMP:14175"/>
        <dbReference type="ChEBI" id="CHEBI:15378"/>
        <dbReference type="ChEBI" id="CHEBI:29969"/>
        <dbReference type="ChEBI" id="CHEBI:64479"/>
        <dbReference type="ChEBI" id="CHEBI:78483"/>
        <dbReference type="ChEBI" id="CHEBI:138936"/>
    </reaction>
    <physiologicalReaction direction="left-to-right" evidence="1">
        <dbReference type="Rhea" id="RHEA:70616"/>
    </physiologicalReaction>
</comment>
<comment type="catalytic activity">
    <reaction evidence="1">
        <text>(9Z)-hexadecenoyl-[ACP] + L-lysyl-[protein] = N(6)-[(9Z)-hexadecenoyl]-L-lysyl-[protein] + holo-[ACP] + H(+)</text>
        <dbReference type="Rhea" id="RHEA:70651"/>
        <dbReference type="Rhea" id="RHEA-COMP:9685"/>
        <dbReference type="Rhea" id="RHEA-COMP:9752"/>
        <dbReference type="Rhea" id="RHEA-COMP:10800"/>
        <dbReference type="Rhea" id="RHEA-COMP:17945"/>
        <dbReference type="ChEBI" id="CHEBI:15378"/>
        <dbReference type="ChEBI" id="CHEBI:29969"/>
        <dbReference type="ChEBI" id="CHEBI:64479"/>
        <dbReference type="ChEBI" id="CHEBI:83989"/>
        <dbReference type="ChEBI" id="CHEBI:189851"/>
    </reaction>
    <physiologicalReaction direction="left-to-right" evidence="1">
        <dbReference type="Rhea" id="RHEA:70652"/>
    </physiologicalReaction>
</comment>
<comment type="subunit">
    <text evidence="2">Homodimer.</text>
</comment>
<comment type="subcellular location">
    <subcellularLocation>
        <location evidence="1">Cytoplasm</location>
    </subcellularLocation>
</comment>
<comment type="similarity">
    <text evidence="3">Belongs to the RTX toxin acyltransferase family.</text>
</comment>
<comment type="sequence caution" evidence="3">
    <conflict type="erroneous initiation">
        <sequence resource="EMBL-CDS" id="CAE30821"/>
    </conflict>
</comment>
<evidence type="ECO:0000250" key="1">
    <source>
        <dbReference type="UniProtKB" id="P0A3I5"/>
    </source>
</evidence>
<evidence type="ECO:0000250" key="2">
    <source>
        <dbReference type="UniProtKB" id="P55132"/>
    </source>
</evidence>
<evidence type="ECO:0000305" key="3"/>